<protein>
    <recommendedName>
        <fullName evidence="1">Enolase</fullName>
        <ecNumber evidence="1 3">4.2.1.11</ecNumber>
    </recommendedName>
    <alternativeName>
        <fullName evidence="1">2-phospho-D-glycerate hydro-lyase</fullName>
    </alternativeName>
    <alternativeName>
        <fullName evidence="1">2-phosphoglycerate dehydratase</fullName>
    </alternativeName>
    <alternativeName>
        <fullName>Laminin-binding protein</fullName>
    </alternativeName>
</protein>
<evidence type="ECO:0000255" key="1">
    <source>
        <dbReference type="HAMAP-Rule" id="MF_00318"/>
    </source>
</evidence>
<evidence type="ECO:0000269" key="2">
    <source>
    </source>
</evidence>
<evidence type="ECO:0000269" key="3">
    <source>
    </source>
</evidence>
<evidence type="ECO:0007744" key="4">
    <source>
        <dbReference type="PDB" id="5BOE"/>
    </source>
</evidence>
<evidence type="ECO:0007744" key="5">
    <source>
        <dbReference type="PDB" id="5BOF"/>
    </source>
</evidence>
<evidence type="ECO:0007829" key="6">
    <source>
        <dbReference type="PDB" id="5BOE"/>
    </source>
</evidence>
<keyword id="KW-0002">3D-structure</keyword>
<keyword id="KW-0963">Cytoplasm</keyword>
<keyword id="KW-0903">Direct protein sequencing</keyword>
<keyword id="KW-0324">Glycolysis</keyword>
<keyword id="KW-0456">Lyase</keyword>
<keyword id="KW-0460">Magnesium</keyword>
<keyword id="KW-0479">Metal-binding</keyword>
<keyword id="KW-0964">Secreted</keyword>
<keyword id="KW-0843">Virulence</keyword>
<reference key="1">
    <citation type="submission" date="1998-05" db="EMBL/GenBank/DDBJ databases">
        <title>Identification of enolase as a laminin binding protein at the surface of Staphylococcus aureus.</title>
        <authorList>
            <person name="Choi G.H."/>
            <person name="Simpson A.J."/>
        </authorList>
    </citation>
    <scope>NUCLEOTIDE SEQUENCE [GENOMIC DNA]</scope>
    <source>
        <strain>ISP3</strain>
    </source>
</reference>
<reference key="2">
    <citation type="journal article" date="2004" name="Microbes Infect.">
        <title>Identification of enolase as a laminin-binding protein on the surface of Staphylococcus aureus.</title>
        <authorList>
            <person name="Carneiro C.R.W."/>
            <person name="Postol E."/>
            <person name="Nomizo R."/>
            <person name="Reis L.F.L."/>
            <person name="Brentani R.R."/>
        </authorList>
    </citation>
    <scope>PARTIAL PROTEIN SEQUENCE</scope>
    <scope>SUBCELLULAR LOCATION</scope>
    <scope>FUNCTION IN VIRULENCE</scope>
    <scope>BINDING TO LAMININ</scope>
    <source>
        <strain>ATCC 10832 / Wood 46</strain>
    </source>
</reference>
<reference evidence="4 5" key="3">
    <citation type="journal article" date="2015" name="Acta Crystallogr. D">
        <title>Octameric structure of Staphylococcus aureus enolase in complex with phosphoenolpyruvate.</title>
        <authorList>
            <person name="Wu Y."/>
            <person name="Wang C."/>
            <person name="Lin S."/>
            <person name="Wu M."/>
            <person name="Han L."/>
            <person name="Tian C."/>
            <person name="Zhang X."/>
            <person name="Zang J."/>
        </authorList>
    </citation>
    <scope>X-RAY CRYSTALLOGRAPHY (1.60 ANGSTROMS) IN COMPLEX WITH MG(2+) AND PHOSPHOENOLPYRUVATE</scope>
    <scope>FUNCTION</scope>
    <scope>CATALYTIC ACTIVITY</scope>
    <scope>BIOPHYSICOCHEMICAL PROPERTIES</scope>
    <scope>COFACTOR</scope>
    <scope>SUBUNIT</scope>
    <scope>MUTAGENESIS OF TYR-135; GLY-138; PHE-139; ASN-140; ASP-355 AND ASN-389</scope>
</reference>
<sequence length="434" mass="47117">MPIITDVYAREVLDSRGNPTVEVEVLTESGAFGRALVPSGASTGEHEAVELRDGDKSRYLGKGVTKAVENVNEIIAPEIIEGEFSVLDQVSIDKMMIALDGTPNKGKLGANAILGVSIAVARAAADLLGQPLYKYLGGFNGKQLPVPMMNIVNGGSHSDAPIAFQEFMILPVGATTFKESLRWGTEIFHNLKSILSQRGLETAVGDEGGFAPKFEGTEDAVETIIQAIEAAGYKPGEEVFLGFDCASSEFYENGVYDYSKFEGEHGAKRTAAEQVDYLEQLVDKYPIITIEDGMDENDWDGWKQLTERIGDRVQLVGDDLFVTNTEILAKGIENGIGNSILIKVNQIGTLTETFDAIEMAQKAGYTAVVSHRSGETEDTTIADIAVATNAGQIKTGSLSRTDRIAKYNQLLRIEDELFETAKYDGIKSFYNLDK</sequence>
<gene>
    <name evidence="1" type="primary">eno</name>
</gene>
<feature type="chain" id="PRO_0000133970" description="Enolase">
    <location>
        <begin position="1"/>
        <end position="434"/>
    </location>
</feature>
<feature type="active site" description="Proton donor" evidence="1">
    <location>
        <position position="207"/>
    </location>
</feature>
<feature type="active site" description="Proton acceptor" evidence="1">
    <location>
        <position position="343"/>
    </location>
</feature>
<feature type="binding site" evidence="4">
    <location>
        <position position="41"/>
    </location>
    <ligand>
        <name>phosphoenolpyruvate</name>
        <dbReference type="ChEBI" id="CHEBI:58702"/>
    </ligand>
</feature>
<feature type="binding site" evidence="1">
    <location>
        <position position="165"/>
    </location>
    <ligand>
        <name>(2R)-2-phosphoglycerate</name>
        <dbReference type="ChEBI" id="CHEBI:58289"/>
    </ligand>
</feature>
<feature type="binding site" evidence="1 3 4 5">
    <location>
        <position position="244"/>
    </location>
    <ligand>
        <name>Mg(2+)</name>
        <dbReference type="ChEBI" id="CHEBI:18420"/>
    </ligand>
</feature>
<feature type="binding site" evidence="1 3 4 5">
    <location>
        <position position="291"/>
    </location>
    <ligand>
        <name>Mg(2+)</name>
        <dbReference type="ChEBI" id="CHEBI:18420"/>
    </ligand>
</feature>
<feature type="binding site" evidence="1 3 4 5">
    <location>
        <position position="318"/>
    </location>
    <ligand>
        <name>Mg(2+)</name>
        <dbReference type="ChEBI" id="CHEBI:18420"/>
    </ligand>
</feature>
<feature type="binding site" evidence="1">
    <location>
        <position position="343"/>
    </location>
    <ligand>
        <name>(2R)-2-phosphoglycerate</name>
        <dbReference type="ChEBI" id="CHEBI:58289"/>
    </ligand>
</feature>
<feature type="binding site" evidence="3 4">
    <location>
        <position position="343"/>
    </location>
    <ligand>
        <name>phosphoenolpyruvate</name>
        <dbReference type="ChEBI" id="CHEBI:58702"/>
    </ligand>
</feature>
<feature type="binding site" evidence="1">
    <location>
        <position position="372"/>
    </location>
    <ligand>
        <name>(2R)-2-phosphoglycerate</name>
        <dbReference type="ChEBI" id="CHEBI:58289"/>
    </ligand>
</feature>
<feature type="binding site" evidence="3 4">
    <location>
        <position position="372"/>
    </location>
    <ligand>
        <name>phosphoenolpyruvate</name>
        <dbReference type="ChEBI" id="CHEBI:58702"/>
    </ligand>
</feature>
<feature type="binding site" evidence="1">
    <location>
        <position position="373"/>
    </location>
    <ligand>
        <name>(2R)-2-phosphoglycerate</name>
        <dbReference type="ChEBI" id="CHEBI:58289"/>
    </ligand>
</feature>
<feature type="binding site" evidence="3 4">
    <location>
        <position position="373"/>
    </location>
    <ligand>
        <name>phosphoenolpyruvate</name>
        <dbReference type="ChEBI" id="CHEBI:58702"/>
    </ligand>
</feature>
<feature type="binding site" evidence="1">
    <location>
        <position position="394"/>
    </location>
    <ligand>
        <name>(2R)-2-phosphoglycerate</name>
        <dbReference type="ChEBI" id="CHEBI:58289"/>
    </ligand>
</feature>
<feature type="binding site" evidence="3 4">
    <location>
        <position position="394"/>
    </location>
    <ligand>
        <name>phosphoenolpyruvate</name>
        <dbReference type="ChEBI" id="CHEBI:58702"/>
    </ligand>
</feature>
<feature type="mutagenesis site" description="No longer forms homooctamers." evidence="3">
    <original>Y</original>
    <variation>A</variation>
    <location>
        <position position="135"/>
    </location>
</feature>
<feature type="mutagenesis site" description="No longer forms homooctamers." evidence="3">
    <original>G</original>
    <variation>A</variation>
    <location>
        <position position="138"/>
    </location>
</feature>
<feature type="mutagenesis site" description="Significantly impairs homooctamer formation, no enzymatic activity." evidence="3">
    <original>F</original>
    <variation>A</variation>
    <location>
        <position position="139"/>
    </location>
</feature>
<feature type="mutagenesis site" description="Significantly impairs homooctamer formation." evidence="3">
    <original>N</original>
    <variation>A</variation>
    <location>
        <position position="140"/>
    </location>
</feature>
<feature type="mutagenesis site" description="Significantly impairs homooctamer formation, no enzymatic activity." evidence="3">
    <original>D</original>
    <variation>A</variation>
    <location>
        <position position="355"/>
    </location>
</feature>
<feature type="mutagenesis site" description="Slightly decrease in homooctamer formation, octomeric form has about 50% activity, dimeric form has none." evidence="3">
    <original>N</original>
    <variation>A</variation>
    <location>
        <position position="389"/>
    </location>
</feature>
<feature type="strand" evidence="6">
    <location>
        <begin position="3"/>
        <end position="13"/>
    </location>
</feature>
<feature type="strand" evidence="6">
    <location>
        <begin position="19"/>
        <end position="27"/>
    </location>
</feature>
<feature type="strand" evidence="6">
    <location>
        <begin position="32"/>
        <end position="36"/>
    </location>
</feature>
<feature type="strand" evidence="6">
    <location>
        <begin position="45"/>
        <end position="47"/>
    </location>
</feature>
<feature type="helix" evidence="6">
    <location>
        <begin position="59"/>
        <end position="61"/>
    </location>
</feature>
<feature type="helix" evidence="6">
    <location>
        <begin position="65"/>
        <end position="73"/>
    </location>
</feature>
<feature type="helix" evidence="6">
    <location>
        <begin position="75"/>
        <end position="81"/>
    </location>
</feature>
<feature type="helix" evidence="6">
    <location>
        <begin position="89"/>
        <end position="100"/>
    </location>
</feature>
<feature type="turn" evidence="6">
    <location>
        <begin position="106"/>
        <end position="108"/>
    </location>
</feature>
<feature type="helix" evidence="6">
    <location>
        <begin position="110"/>
        <end position="128"/>
    </location>
</feature>
<feature type="helix" evidence="6">
    <location>
        <begin position="132"/>
        <end position="137"/>
    </location>
</feature>
<feature type="strand" evidence="6">
    <location>
        <begin position="149"/>
        <end position="153"/>
    </location>
</feature>
<feature type="helix" evidence="6">
    <location>
        <begin position="155"/>
        <end position="157"/>
    </location>
</feature>
<feature type="strand" evidence="6">
    <location>
        <begin position="159"/>
        <end position="161"/>
    </location>
</feature>
<feature type="strand" evidence="6">
    <location>
        <begin position="165"/>
        <end position="170"/>
    </location>
</feature>
<feature type="helix" evidence="6">
    <location>
        <begin position="177"/>
        <end position="197"/>
    </location>
</feature>
<feature type="helix" evidence="6">
    <location>
        <begin position="217"/>
        <end position="230"/>
    </location>
</feature>
<feature type="turn" evidence="6">
    <location>
        <begin position="236"/>
        <end position="238"/>
    </location>
</feature>
<feature type="strand" evidence="6">
    <location>
        <begin position="239"/>
        <end position="244"/>
    </location>
</feature>
<feature type="helix" evidence="6">
    <location>
        <begin position="247"/>
        <end position="250"/>
    </location>
</feature>
<feature type="strand" evidence="6">
    <location>
        <begin position="255"/>
        <end position="257"/>
    </location>
</feature>
<feature type="helix" evidence="6">
    <location>
        <begin position="259"/>
        <end position="262"/>
    </location>
</feature>
<feature type="helix" evidence="6">
    <location>
        <begin position="271"/>
        <end position="284"/>
    </location>
</feature>
<feature type="strand" evidence="6">
    <location>
        <begin position="287"/>
        <end position="292"/>
    </location>
</feature>
<feature type="helix" evidence="6">
    <location>
        <begin position="299"/>
        <end position="309"/>
    </location>
</feature>
<feature type="turn" evidence="6">
    <location>
        <begin position="310"/>
        <end position="312"/>
    </location>
</feature>
<feature type="strand" evidence="6">
    <location>
        <begin position="313"/>
        <end position="318"/>
    </location>
</feature>
<feature type="turn" evidence="6">
    <location>
        <begin position="319"/>
        <end position="323"/>
    </location>
</feature>
<feature type="helix" evidence="6">
    <location>
        <begin position="325"/>
        <end position="334"/>
    </location>
</feature>
<feature type="strand" evidence="6">
    <location>
        <begin position="338"/>
        <end position="342"/>
    </location>
</feature>
<feature type="helix" evidence="6">
    <location>
        <begin position="344"/>
        <end position="347"/>
    </location>
</feature>
<feature type="helix" evidence="6">
    <location>
        <begin position="350"/>
        <end position="362"/>
    </location>
</feature>
<feature type="strand" evidence="6">
    <location>
        <begin position="366"/>
        <end position="370"/>
    </location>
</feature>
<feature type="helix" evidence="6">
    <location>
        <begin position="380"/>
        <end position="387"/>
    </location>
</feature>
<feature type="strand" evidence="6">
    <location>
        <begin position="392"/>
        <end position="394"/>
    </location>
</feature>
<feature type="strand" evidence="6">
    <location>
        <begin position="398"/>
        <end position="400"/>
    </location>
</feature>
<feature type="helix" evidence="6">
    <location>
        <begin position="401"/>
        <end position="417"/>
    </location>
</feature>
<feature type="helix" evidence="6">
    <location>
        <begin position="418"/>
        <end position="420"/>
    </location>
</feature>
<feature type="helix" evidence="6">
    <location>
        <begin position="425"/>
        <end position="428"/>
    </location>
</feature>
<name>ENO_STAAU</name>
<accession>O69174</accession>
<dbReference type="EC" id="4.2.1.11" evidence="1 3"/>
<dbReference type="EMBL" id="AF065394">
    <property type="protein sequence ID" value="AAC17130.1"/>
    <property type="molecule type" value="Genomic_DNA"/>
</dbReference>
<dbReference type="PIR" id="T47276">
    <property type="entry name" value="T47276"/>
</dbReference>
<dbReference type="PDB" id="5BOE">
    <property type="method" value="X-ray"/>
    <property type="resolution" value="1.60 A"/>
    <property type="chains" value="A/B=1-434"/>
</dbReference>
<dbReference type="PDB" id="5BOF">
    <property type="method" value="X-ray"/>
    <property type="resolution" value="2.45 A"/>
    <property type="chains" value="A/B=1-434"/>
</dbReference>
<dbReference type="PDBsum" id="5BOE"/>
<dbReference type="PDBsum" id="5BOF"/>
<dbReference type="SMR" id="O69174"/>
<dbReference type="BRENDA" id="4.2.1.11">
    <property type="organism ID" value="3352"/>
</dbReference>
<dbReference type="UniPathway" id="UPA00109">
    <property type="reaction ID" value="UER00187"/>
</dbReference>
<dbReference type="EvolutionaryTrace" id="O69174"/>
<dbReference type="GO" id="GO:0009986">
    <property type="term" value="C:cell surface"/>
    <property type="evidence" value="ECO:0007669"/>
    <property type="project" value="UniProtKB-SubCell"/>
</dbReference>
<dbReference type="GO" id="GO:0005576">
    <property type="term" value="C:extracellular region"/>
    <property type="evidence" value="ECO:0007669"/>
    <property type="project" value="UniProtKB-SubCell"/>
</dbReference>
<dbReference type="GO" id="GO:0000015">
    <property type="term" value="C:phosphopyruvate hydratase complex"/>
    <property type="evidence" value="ECO:0007669"/>
    <property type="project" value="InterPro"/>
</dbReference>
<dbReference type="GO" id="GO:0000287">
    <property type="term" value="F:magnesium ion binding"/>
    <property type="evidence" value="ECO:0007669"/>
    <property type="project" value="UniProtKB-UniRule"/>
</dbReference>
<dbReference type="GO" id="GO:0004634">
    <property type="term" value="F:phosphopyruvate hydratase activity"/>
    <property type="evidence" value="ECO:0007669"/>
    <property type="project" value="UniProtKB-UniRule"/>
</dbReference>
<dbReference type="GO" id="GO:0006096">
    <property type="term" value="P:glycolytic process"/>
    <property type="evidence" value="ECO:0007669"/>
    <property type="project" value="UniProtKB-UniRule"/>
</dbReference>
<dbReference type="CDD" id="cd03313">
    <property type="entry name" value="enolase"/>
    <property type="match status" value="1"/>
</dbReference>
<dbReference type="FunFam" id="3.20.20.120:FF:000001">
    <property type="entry name" value="Enolase"/>
    <property type="match status" value="1"/>
</dbReference>
<dbReference type="FunFam" id="3.30.390.10:FF:000001">
    <property type="entry name" value="Enolase"/>
    <property type="match status" value="1"/>
</dbReference>
<dbReference type="Gene3D" id="3.20.20.120">
    <property type="entry name" value="Enolase-like C-terminal domain"/>
    <property type="match status" value="1"/>
</dbReference>
<dbReference type="Gene3D" id="3.30.390.10">
    <property type="entry name" value="Enolase-like, N-terminal domain"/>
    <property type="match status" value="1"/>
</dbReference>
<dbReference type="HAMAP" id="MF_00318">
    <property type="entry name" value="Enolase"/>
    <property type="match status" value="1"/>
</dbReference>
<dbReference type="InterPro" id="IPR000941">
    <property type="entry name" value="Enolase"/>
</dbReference>
<dbReference type="InterPro" id="IPR036849">
    <property type="entry name" value="Enolase-like_C_sf"/>
</dbReference>
<dbReference type="InterPro" id="IPR029017">
    <property type="entry name" value="Enolase-like_N"/>
</dbReference>
<dbReference type="InterPro" id="IPR020810">
    <property type="entry name" value="Enolase_C"/>
</dbReference>
<dbReference type="InterPro" id="IPR020809">
    <property type="entry name" value="Enolase_CS"/>
</dbReference>
<dbReference type="InterPro" id="IPR020811">
    <property type="entry name" value="Enolase_N"/>
</dbReference>
<dbReference type="NCBIfam" id="TIGR01060">
    <property type="entry name" value="eno"/>
    <property type="match status" value="1"/>
</dbReference>
<dbReference type="PANTHER" id="PTHR11902">
    <property type="entry name" value="ENOLASE"/>
    <property type="match status" value="1"/>
</dbReference>
<dbReference type="PANTHER" id="PTHR11902:SF1">
    <property type="entry name" value="ENOLASE"/>
    <property type="match status" value="1"/>
</dbReference>
<dbReference type="Pfam" id="PF00113">
    <property type="entry name" value="Enolase_C"/>
    <property type="match status" value="1"/>
</dbReference>
<dbReference type="Pfam" id="PF03952">
    <property type="entry name" value="Enolase_N"/>
    <property type="match status" value="1"/>
</dbReference>
<dbReference type="PIRSF" id="PIRSF001400">
    <property type="entry name" value="Enolase"/>
    <property type="match status" value="1"/>
</dbReference>
<dbReference type="PRINTS" id="PR00148">
    <property type="entry name" value="ENOLASE"/>
</dbReference>
<dbReference type="SFLD" id="SFLDF00002">
    <property type="entry name" value="enolase"/>
    <property type="match status" value="1"/>
</dbReference>
<dbReference type="SFLD" id="SFLDG00178">
    <property type="entry name" value="enolase"/>
    <property type="match status" value="1"/>
</dbReference>
<dbReference type="SMART" id="SM01192">
    <property type="entry name" value="Enolase_C"/>
    <property type="match status" value="1"/>
</dbReference>
<dbReference type="SMART" id="SM01193">
    <property type="entry name" value="Enolase_N"/>
    <property type="match status" value="1"/>
</dbReference>
<dbReference type="SUPFAM" id="SSF51604">
    <property type="entry name" value="Enolase C-terminal domain-like"/>
    <property type="match status" value="1"/>
</dbReference>
<dbReference type="SUPFAM" id="SSF54826">
    <property type="entry name" value="Enolase N-terminal domain-like"/>
    <property type="match status" value="1"/>
</dbReference>
<dbReference type="PROSITE" id="PS00164">
    <property type="entry name" value="ENOLASE"/>
    <property type="match status" value="1"/>
</dbReference>
<proteinExistence type="evidence at protein level"/>
<comment type="function">
    <text evidence="1 3">Catalyzes the reversible conversion of 2-phosphoglycerate (2-PG) into phosphoenolpyruvate (PEP) (PubMed:26627653). It is essential for the degradation of carbohydrates via glycolysis.</text>
</comment>
<comment type="function">
    <text evidence="2">'Moonlights' as a laminin receptor. Binds laminin when expressed on the bacterial cell surface; this probably induces destruction of the extracellular matrix, favoring invasion and dissemination.</text>
</comment>
<comment type="catalytic activity">
    <reaction evidence="1 3">
        <text>(2R)-2-phosphoglycerate = phosphoenolpyruvate + H2O</text>
        <dbReference type="Rhea" id="RHEA:10164"/>
        <dbReference type="ChEBI" id="CHEBI:15377"/>
        <dbReference type="ChEBI" id="CHEBI:58289"/>
        <dbReference type="ChEBI" id="CHEBI:58702"/>
        <dbReference type="EC" id="4.2.1.11"/>
    </reaction>
    <physiologicalReaction direction="left-to-right" evidence="3">
        <dbReference type="Rhea" id="RHEA:10165"/>
    </physiologicalReaction>
</comment>
<comment type="cofactor">
    <cofactor evidence="1 3">
        <name>Mg(2+)</name>
        <dbReference type="ChEBI" id="CHEBI:18420"/>
    </cofactor>
    <text evidence="1">Binds a second Mg(2+) ion via substrate during catalysis.</text>
</comment>
<comment type="biophysicochemical properties">
    <kinetics>
        <KM evidence="3">0.37 mM for 2-phosphoglycerate by octamer</KM>
        <text evidence="3">kcat is 83 sec(-1) for octamer.</text>
    </kinetics>
</comment>
<comment type="pathway">
    <text evidence="1">Carbohydrate degradation; glycolysis; pyruvate from D-glyceraldehyde 3-phosphate: step 4/5.</text>
</comment>
<comment type="subunit">
    <text evidence="3">Homodimer and homooctamer; the homodimer is inactive (PubMed:26627653).</text>
</comment>
<comment type="subcellular location">
    <subcellularLocation>
        <location evidence="1 2">Cytoplasm</location>
    </subcellularLocation>
    <subcellularLocation>
        <location evidence="1 2">Secreted</location>
    </subcellularLocation>
    <subcellularLocation>
        <location evidence="1 2">Cell surface</location>
    </subcellularLocation>
    <text evidence="1 2">Fractions of enolase are present in both the cytoplasm and on the cell surface (PubMed:15158195). Once secreted, it remains attached to the cell surface (PubMed:15158195).</text>
</comment>
<comment type="similarity">
    <text evidence="1">Belongs to the enolase family.</text>
</comment>
<organism>
    <name type="scientific">Staphylococcus aureus</name>
    <dbReference type="NCBI Taxonomy" id="1280"/>
    <lineage>
        <taxon>Bacteria</taxon>
        <taxon>Bacillati</taxon>
        <taxon>Bacillota</taxon>
        <taxon>Bacilli</taxon>
        <taxon>Bacillales</taxon>
        <taxon>Staphylococcaceae</taxon>
        <taxon>Staphylococcus</taxon>
    </lineage>
</organism>